<sequence>MIHMKQLTSKEEWAESYPIMSELRTELDIETYLQRLEACVQKESYMLFALYENTAIRALCGALPRVSIHKGEHLWIADLVTTAPCRSKGYGKMLLDYASDWARKAGLGFVSLSSGLQRKDAHRFYTDKMGFTIESYLFRKPV</sequence>
<accession>O07579</accession>
<accession>Q796X4</accession>
<evidence type="ECO:0000255" key="1">
    <source>
        <dbReference type="PROSITE-ProRule" id="PRU00532"/>
    </source>
</evidence>
<evidence type="ECO:0000305" key="2"/>
<feature type="chain" id="PRO_0000360503" description="Uncharacterized N-acetyltransferase YhdJ">
    <location>
        <begin position="1"/>
        <end position="142"/>
    </location>
</feature>
<feature type="domain" description="N-acetyltransferase" evidence="1">
    <location>
        <begin position="2"/>
        <end position="142"/>
    </location>
</feature>
<organism>
    <name type="scientific">Bacillus subtilis (strain 168)</name>
    <dbReference type="NCBI Taxonomy" id="224308"/>
    <lineage>
        <taxon>Bacteria</taxon>
        <taxon>Bacillati</taxon>
        <taxon>Bacillota</taxon>
        <taxon>Bacilli</taxon>
        <taxon>Bacillales</taxon>
        <taxon>Bacillaceae</taxon>
        <taxon>Bacillus</taxon>
    </lineage>
</organism>
<dbReference type="EMBL" id="Y14082">
    <property type="protein sequence ID" value="CAA74494.1"/>
    <property type="molecule type" value="Genomic_DNA"/>
</dbReference>
<dbReference type="EMBL" id="AL009126">
    <property type="protein sequence ID" value="CAB12788.1"/>
    <property type="molecule type" value="Genomic_DNA"/>
</dbReference>
<dbReference type="PIR" id="H69825">
    <property type="entry name" value="H69825"/>
</dbReference>
<dbReference type="RefSeq" id="NP_388830.1">
    <property type="nucleotide sequence ID" value="NC_000964.3"/>
</dbReference>
<dbReference type="RefSeq" id="WP_009966899.1">
    <property type="nucleotide sequence ID" value="NZ_OZ025638.1"/>
</dbReference>
<dbReference type="SMR" id="O07579"/>
<dbReference type="FunCoup" id="O07579">
    <property type="interactions" value="1"/>
</dbReference>
<dbReference type="STRING" id="224308.BSU09490"/>
<dbReference type="PaxDb" id="224308-BSU09490"/>
<dbReference type="EnsemblBacteria" id="CAB12788">
    <property type="protein sequence ID" value="CAB12788"/>
    <property type="gene ID" value="BSU_09490"/>
</dbReference>
<dbReference type="GeneID" id="939275"/>
<dbReference type="KEGG" id="bsu:BSU09490"/>
<dbReference type="PATRIC" id="fig|224308.179.peg.1022"/>
<dbReference type="eggNOG" id="COG0456">
    <property type="taxonomic scope" value="Bacteria"/>
</dbReference>
<dbReference type="InParanoid" id="O07579"/>
<dbReference type="OrthoDB" id="9805924at2"/>
<dbReference type="PhylomeDB" id="O07579"/>
<dbReference type="BioCyc" id="BSUB:BSU09490-MONOMER"/>
<dbReference type="Proteomes" id="UP000001570">
    <property type="component" value="Chromosome"/>
</dbReference>
<dbReference type="GO" id="GO:0016747">
    <property type="term" value="F:acyltransferase activity, transferring groups other than amino-acyl groups"/>
    <property type="evidence" value="ECO:0007669"/>
    <property type="project" value="InterPro"/>
</dbReference>
<dbReference type="CDD" id="cd04301">
    <property type="entry name" value="NAT_SF"/>
    <property type="match status" value="1"/>
</dbReference>
<dbReference type="Gene3D" id="3.40.630.30">
    <property type="match status" value="1"/>
</dbReference>
<dbReference type="InterPro" id="IPR016181">
    <property type="entry name" value="Acyl_CoA_acyltransferase"/>
</dbReference>
<dbReference type="InterPro" id="IPR000182">
    <property type="entry name" value="GNAT_dom"/>
</dbReference>
<dbReference type="Pfam" id="PF00583">
    <property type="entry name" value="Acetyltransf_1"/>
    <property type="match status" value="1"/>
</dbReference>
<dbReference type="SUPFAM" id="SSF55729">
    <property type="entry name" value="Acyl-CoA N-acyltransferases (Nat)"/>
    <property type="match status" value="1"/>
</dbReference>
<dbReference type="PROSITE" id="PS51186">
    <property type="entry name" value="GNAT"/>
    <property type="match status" value="1"/>
</dbReference>
<keyword id="KW-0012">Acyltransferase</keyword>
<keyword id="KW-1185">Reference proteome</keyword>
<keyword id="KW-0808">Transferase</keyword>
<reference key="1">
    <citation type="journal article" date="1998" name="Microbiology">
        <title>The 172 kb prkA-addAB region from 83 degrees to 97 degrees of the Bacillus subtilis chromosome contains several dysfunctional genes, the glyB marker, many genes encoding transporter proteins, and the ubiquitous hit gene.</title>
        <authorList>
            <person name="Noback M.A."/>
            <person name="Holsappel S."/>
            <person name="Kiewiet R."/>
            <person name="Terpstra P."/>
            <person name="Wambutt R."/>
            <person name="Wedler H."/>
            <person name="Venema G."/>
            <person name="Bron S."/>
        </authorList>
    </citation>
    <scope>NUCLEOTIDE SEQUENCE [GENOMIC DNA]</scope>
    <source>
        <strain>168</strain>
    </source>
</reference>
<reference key="2">
    <citation type="journal article" date="1997" name="Nature">
        <title>The complete genome sequence of the Gram-positive bacterium Bacillus subtilis.</title>
        <authorList>
            <person name="Kunst F."/>
            <person name="Ogasawara N."/>
            <person name="Moszer I."/>
            <person name="Albertini A.M."/>
            <person name="Alloni G."/>
            <person name="Azevedo V."/>
            <person name="Bertero M.G."/>
            <person name="Bessieres P."/>
            <person name="Bolotin A."/>
            <person name="Borchert S."/>
            <person name="Borriss R."/>
            <person name="Boursier L."/>
            <person name="Brans A."/>
            <person name="Braun M."/>
            <person name="Brignell S.C."/>
            <person name="Bron S."/>
            <person name="Brouillet S."/>
            <person name="Bruschi C.V."/>
            <person name="Caldwell B."/>
            <person name="Capuano V."/>
            <person name="Carter N.M."/>
            <person name="Choi S.-K."/>
            <person name="Codani J.-J."/>
            <person name="Connerton I.F."/>
            <person name="Cummings N.J."/>
            <person name="Daniel R.A."/>
            <person name="Denizot F."/>
            <person name="Devine K.M."/>
            <person name="Duesterhoeft A."/>
            <person name="Ehrlich S.D."/>
            <person name="Emmerson P.T."/>
            <person name="Entian K.-D."/>
            <person name="Errington J."/>
            <person name="Fabret C."/>
            <person name="Ferrari E."/>
            <person name="Foulger D."/>
            <person name="Fritz C."/>
            <person name="Fujita M."/>
            <person name="Fujita Y."/>
            <person name="Fuma S."/>
            <person name="Galizzi A."/>
            <person name="Galleron N."/>
            <person name="Ghim S.-Y."/>
            <person name="Glaser P."/>
            <person name="Goffeau A."/>
            <person name="Golightly E.J."/>
            <person name="Grandi G."/>
            <person name="Guiseppi G."/>
            <person name="Guy B.J."/>
            <person name="Haga K."/>
            <person name="Haiech J."/>
            <person name="Harwood C.R."/>
            <person name="Henaut A."/>
            <person name="Hilbert H."/>
            <person name="Holsappel S."/>
            <person name="Hosono S."/>
            <person name="Hullo M.-F."/>
            <person name="Itaya M."/>
            <person name="Jones L.-M."/>
            <person name="Joris B."/>
            <person name="Karamata D."/>
            <person name="Kasahara Y."/>
            <person name="Klaerr-Blanchard M."/>
            <person name="Klein C."/>
            <person name="Kobayashi Y."/>
            <person name="Koetter P."/>
            <person name="Koningstein G."/>
            <person name="Krogh S."/>
            <person name="Kumano M."/>
            <person name="Kurita K."/>
            <person name="Lapidus A."/>
            <person name="Lardinois S."/>
            <person name="Lauber J."/>
            <person name="Lazarevic V."/>
            <person name="Lee S.-M."/>
            <person name="Levine A."/>
            <person name="Liu H."/>
            <person name="Masuda S."/>
            <person name="Mauel C."/>
            <person name="Medigue C."/>
            <person name="Medina N."/>
            <person name="Mellado R.P."/>
            <person name="Mizuno M."/>
            <person name="Moestl D."/>
            <person name="Nakai S."/>
            <person name="Noback M."/>
            <person name="Noone D."/>
            <person name="O'Reilly M."/>
            <person name="Ogawa K."/>
            <person name="Ogiwara A."/>
            <person name="Oudega B."/>
            <person name="Park S.-H."/>
            <person name="Parro V."/>
            <person name="Pohl T.M."/>
            <person name="Portetelle D."/>
            <person name="Porwollik S."/>
            <person name="Prescott A.M."/>
            <person name="Presecan E."/>
            <person name="Pujic P."/>
            <person name="Purnelle B."/>
            <person name="Rapoport G."/>
            <person name="Rey M."/>
            <person name="Reynolds S."/>
            <person name="Rieger M."/>
            <person name="Rivolta C."/>
            <person name="Rocha E."/>
            <person name="Roche B."/>
            <person name="Rose M."/>
            <person name="Sadaie Y."/>
            <person name="Sato T."/>
            <person name="Scanlan E."/>
            <person name="Schleich S."/>
            <person name="Schroeter R."/>
            <person name="Scoffone F."/>
            <person name="Sekiguchi J."/>
            <person name="Sekowska A."/>
            <person name="Seror S.J."/>
            <person name="Serror P."/>
            <person name="Shin B.-S."/>
            <person name="Soldo B."/>
            <person name="Sorokin A."/>
            <person name="Tacconi E."/>
            <person name="Takagi T."/>
            <person name="Takahashi H."/>
            <person name="Takemaru K."/>
            <person name="Takeuchi M."/>
            <person name="Tamakoshi A."/>
            <person name="Tanaka T."/>
            <person name="Terpstra P."/>
            <person name="Tognoni A."/>
            <person name="Tosato V."/>
            <person name="Uchiyama S."/>
            <person name="Vandenbol M."/>
            <person name="Vannier F."/>
            <person name="Vassarotti A."/>
            <person name="Viari A."/>
            <person name="Wambutt R."/>
            <person name="Wedler E."/>
            <person name="Wedler H."/>
            <person name="Weitzenegger T."/>
            <person name="Winters P."/>
            <person name="Wipat A."/>
            <person name="Yamamoto H."/>
            <person name="Yamane K."/>
            <person name="Yasumoto K."/>
            <person name="Yata K."/>
            <person name="Yoshida K."/>
            <person name="Yoshikawa H.-F."/>
            <person name="Zumstein E."/>
            <person name="Yoshikawa H."/>
            <person name="Danchin A."/>
        </authorList>
    </citation>
    <scope>NUCLEOTIDE SEQUENCE [LARGE SCALE GENOMIC DNA]</scope>
    <source>
        <strain>168</strain>
    </source>
</reference>
<comment type="similarity">
    <text evidence="2">Belongs to the acetyltransferase family.</text>
</comment>
<protein>
    <recommendedName>
        <fullName>Uncharacterized N-acetyltransferase YhdJ</fullName>
    </recommendedName>
</protein>
<gene>
    <name type="primary">yhdJ</name>
    <name type="ordered locus">BSU09490</name>
</gene>
<name>YHDJ_BACSU</name>
<proteinExistence type="inferred from homology"/>